<proteinExistence type="inferred from homology"/>
<keyword id="KW-0169">Cobalamin biosynthesis</keyword>
<keyword id="KW-0489">Methyltransferase</keyword>
<keyword id="KW-0949">S-adenosyl-L-methionine</keyword>
<keyword id="KW-0808">Transferase</keyword>
<comment type="function">
    <text evidence="1">Catalyzes the methylation of C-1 in cobalt-precorrin-5B to form cobalt-precorrin-6A.</text>
</comment>
<comment type="catalytic activity">
    <reaction evidence="1">
        <text>Co-precorrin-5B + S-adenosyl-L-methionine = Co-precorrin-6A + S-adenosyl-L-homocysteine</text>
        <dbReference type="Rhea" id="RHEA:26285"/>
        <dbReference type="ChEBI" id="CHEBI:57856"/>
        <dbReference type="ChEBI" id="CHEBI:59789"/>
        <dbReference type="ChEBI" id="CHEBI:60063"/>
        <dbReference type="ChEBI" id="CHEBI:60064"/>
        <dbReference type="EC" id="2.1.1.195"/>
    </reaction>
</comment>
<comment type="pathway">
    <text evidence="1">Cofactor biosynthesis; adenosylcobalamin biosynthesis; cob(II)yrinate a,c-diamide from sirohydrochlorin (anaerobic route): step 6/10.</text>
</comment>
<comment type="similarity">
    <text evidence="1">Belongs to the CbiD family.</text>
</comment>
<reference key="1">
    <citation type="submission" date="2008-04" db="EMBL/GenBank/DDBJ databases">
        <title>Complete sequence of chromosome 1 of Burkholderia ambifaria MC40-6.</title>
        <authorList>
            <person name="Copeland A."/>
            <person name="Lucas S."/>
            <person name="Lapidus A."/>
            <person name="Glavina del Rio T."/>
            <person name="Dalin E."/>
            <person name="Tice H."/>
            <person name="Pitluck S."/>
            <person name="Chain P."/>
            <person name="Malfatti S."/>
            <person name="Shin M."/>
            <person name="Vergez L."/>
            <person name="Lang D."/>
            <person name="Schmutz J."/>
            <person name="Larimer F."/>
            <person name="Land M."/>
            <person name="Hauser L."/>
            <person name="Kyrpides N."/>
            <person name="Lykidis A."/>
            <person name="Ramette A."/>
            <person name="Konstantinidis K."/>
            <person name="Tiedje J."/>
            <person name="Richardson P."/>
        </authorList>
    </citation>
    <scope>NUCLEOTIDE SEQUENCE [LARGE SCALE GENOMIC DNA]</scope>
    <source>
        <strain>MC40-6</strain>
    </source>
</reference>
<feature type="chain" id="PRO_1000133727" description="Cobalt-precorrin-5B C(1)-methyltransferase">
    <location>
        <begin position="1"/>
        <end position="362"/>
    </location>
</feature>
<gene>
    <name evidence="1" type="primary">cbiD</name>
    <name type="ordered locus">BamMC406_1594</name>
</gene>
<protein>
    <recommendedName>
        <fullName evidence="1">Cobalt-precorrin-5B C(1)-methyltransferase</fullName>
        <ecNumber evidence="1">2.1.1.195</ecNumber>
    </recommendedName>
    <alternativeName>
        <fullName evidence="1">Cobalt-precorrin-6A synthase</fullName>
    </alternativeName>
</protein>
<accession>B1YQE3</accession>
<organism>
    <name type="scientific">Burkholderia ambifaria (strain MC40-6)</name>
    <dbReference type="NCBI Taxonomy" id="398577"/>
    <lineage>
        <taxon>Bacteria</taxon>
        <taxon>Pseudomonadati</taxon>
        <taxon>Pseudomonadota</taxon>
        <taxon>Betaproteobacteria</taxon>
        <taxon>Burkholderiales</taxon>
        <taxon>Burkholderiaceae</taxon>
        <taxon>Burkholderia</taxon>
        <taxon>Burkholderia cepacia complex</taxon>
    </lineage>
</organism>
<evidence type="ECO:0000255" key="1">
    <source>
        <dbReference type="HAMAP-Rule" id="MF_00787"/>
    </source>
</evidence>
<dbReference type="EC" id="2.1.1.195" evidence="1"/>
<dbReference type="EMBL" id="CP001025">
    <property type="protein sequence ID" value="ACB64081.1"/>
    <property type="molecule type" value="Genomic_DNA"/>
</dbReference>
<dbReference type="RefSeq" id="WP_012363889.1">
    <property type="nucleotide sequence ID" value="NC_010551.1"/>
</dbReference>
<dbReference type="SMR" id="B1YQE3"/>
<dbReference type="KEGG" id="bac:BamMC406_1594"/>
<dbReference type="HOGENOM" id="CLU_041273_0_0_4"/>
<dbReference type="OrthoDB" id="6439987at2"/>
<dbReference type="UniPathway" id="UPA00148">
    <property type="reaction ID" value="UER00227"/>
</dbReference>
<dbReference type="Proteomes" id="UP000001680">
    <property type="component" value="Chromosome 1"/>
</dbReference>
<dbReference type="GO" id="GO:0043780">
    <property type="term" value="F:cobalt-precorrin-5B C1-methyltransferase activity"/>
    <property type="evidence" value="ECO:0007669"/>
    <property type="project" value="RHEA"/>
</dbReference>
<dbReference type="GO" id="GO:0019251">
    <property type="term" value="P:anaerobic cobalamin biosynthetic process"/>
    <property type="evidence" value="ECO:0007669"/>
    <property type="project" value="UniProtKB-UniRule"/>
</dbReference>
<dbReference type="GO" id="GO:0032259">
    <property type="term" value="P:methylation"/>
    <property type="evidence" value="ECO:0007669"/>
    <property type="project" value="UniProtKB-KW"/>
</dbReference>
<dbReference type="Gene3D" id="3.30.2110.10">
    <property type="entry name" value="CbiD-like"/>
    <property type="match status" value="1"/>
</dbReference>
<dbReference type="HAMAP" id="MF_00787">
    <property type="entry name" value="CbiD"/>
    <property type="match status" value="1"/>
</dbReference>
<dbReference type="InterPro" id="IPR002748">
    <property type="entry name" value="CbiD"/>
</dbReference>
<dbReference type="InterPro" id="IPR036074">
    <property type="entry name" value="CbiD_sf"/>
</dbReference>
<dbReference type="NCBIfam" id="TIGR00312">
    <property type="entry name" value="cbiD"/>
    <property type="match status" value="1"/>
</dbReference>
<dbReference type="NCBIfam" id="NF000849">
    <property type="entry name" value="PRK00075.1-1"/>
    <property type="match status" value="1"/>
</dbReference>
<dbReference type="PANTHER" id="PTHR35863">
    <property type="entry name" value="COBALT-PRECORRIN-5B C(1)-METHYLTRANSFERASE"/>
    <property type="match status" value="1"/>
</dbReference>
<dbReference type="PANTHER" id="PTHR35863:SF1">
    <property type="entry name" value="COBALT-PRECORRIN-5B C(1)-METHYLTRANSFERASE"/>
    <property type="match status" value="1"/>
</dbReference>
<dbReference type="Pfam" id="PF01888">
    <property type="entry name" value="CbiD"/>
    <property type="match status" value="1"/>
</dbReference>
<dbReference type="PIRSF" id="PIRSF026782">
    <property type="entry name" value="CbiD"/>
    <property type="match status" value="1"/>
</dbReference>
<dbReference type="SUPFAM" id="SSF111342">
    <property type="entry name" value="CbiD-like"/>
    <property type="match status" value="1"/>
</dbReference>
<name>CBID_BURA4</name>
<sequence length="362" mass="37427">MRDETPERAAPLRFGYTTGSCATATSLAAARLLVAGHADDAVEIVLPKGQRVMMRLEFCRITADGAEAGTIKDAGDDPDVTHGALVFARVALSAAPGVRFHAGPGVGTVTRAGLTLPVGEPAINPVPRQMMTTHLDALAAEYGYAGGFDVTIGVEGGEALALKTMNPRLGIVGGLSILGTTGIVRPFSCSAYIASIHQGIDVARANGIAHIAACTGNTSEDAMRAHYGLPDMALIEMGDFAGAVLKHLRRAPVSRLSMCGGFGKLSKLAAGHLDLHSRHSSIDLPLLAQWAAEAGANDALQAAMRAANTSQEALKLALADGVPLGDLVCAHALRVARDIVPASVAVEMFAIDRQGRFVGSAR</sequence>